<accession>Q1WU04</accession>
<proteinExistence type="inferred from homology"/>
<comment type="function">
    <text evidence="1">Catalyzes the folate-dependent formation of 5-methyl-uridine at position 54 (M-5-U54) in all tRNAs.</text>
</comment>
<comment type="catalytic activity">
    <reaction evidence="1">
        <text>uridine(54) in tRNA + (6R)-5,10-methylene-5,6,7,8-tetrahydrofolate + NADH + H(+) = 5-methyluridine(54) in tRNA + (6S)-5,6,7,8-tetrahydrofolate + NAD(+)</text>
        <dbReference type="Rhea" id="RHEA:16873"/>
        <dbReference type="Rhea" id="RHEA-COMP:10167"/>
        <dbReference type="Rhea" id="RHEA-COMP:10193"/>
        <dbReference type="ChEBI" id="CHEBI:15378"/>
        <dbReference type="ChEBI" id="CHEBI:15636"/>
        <dbReference type="ChEBI" id="CHEBI:57453"/>
        <dbReference type="ChEBI" id="CHEBI:57540"/>
        <dbReference type="ChEBI" id="CHEBI:57945"/>
        <dbReference type="ChEBI" id="CHEBI:65315"/>
        <dbReference type="ChEBI" id="CHEBI:74447"/>
        <dbReference type="EC" id="2.1.1.74"/>
    </reaction>
</comment>
<comment type="catalytic activity">
    <reaction evidence="1">
        <text>uridine(54) in tRNA + (6R)-5,10-methylene-5,6,7,8-tetrahydrofolate + NADPH + H(+) = 5-methyluridine(54) in tRNA + (6S)-5,6,7,8-tetrahydrofolate + NADP(+)</text>
        <dbReference type="Rhea" id="RHEA:62372"/>
        <dbReference type="Rhea" id="RHEA-COMP:10167"/>
        <dbReference type="Rhea" id="RHEA-COMP:10193"/>
        <dbReference type="ChEBI" id="CHEBI:15378"/>
        <dbReference type="ChEBI" id="CHEBI:15636"/>
        <dbReference type="ChEBI" id="CHEBI:57453"/>
        <dbReference type="ChEBI" id="CHEBI:57783"/>
        <dbReference type="ChEBI" id="CHEBI:58349"/>
        <dbReference type="ChEBI" id="CHEBI:65315"/>
        <dbReference type="ChEBI" id="CHEBI:74447"/>
        <dbReference type="EC" id="2.1.1.74"/>
    </reaction>
</comment>
<comment type="cofactor">
    <cofactor evidence="1">
        <name>FAD</name>
        <dbReference type="ChEBI" id="CHEBI:57692"/>
    </cofactor>
</comment>
<comment type="subcellular location">
    <subcellularLocation>
        <location evidence="1">Cytoplasm</location>
    </subcellularLocation>
</comment>
<comment type="similarity">
    <text evidence="1">Belongs to the MnmG family. TrmFO subfamily.</text>
</comment>
<reference key="1">
    <citation type="journal article" date="2006" name="Proc. Natl. Acad. Sci. U.S.A.">
        <title>Multireplicon genome architecture of Lactobacillus salivarius.</title>
        <authorList>
            <person name="Claesson M.J."/>
            <person name="Li Y."/>
            <person name="Leahy S."/>
            <person name="Canchaya C."/>
            <person name="van Pijkeren J.P."/>
            <person name="Cerdeno-Tarraga A.M."/>
            <person name="Parkhill J."/>
            <person name="Flynn S."/>
            <person name="O'Sullivan G.C."/>
            <person name="Collins J.K."/>
            <person name="Higgins D."/>
            <person name="Shanahan F."/>
            <person name="Fitzgerald G.F."/>
            <person name="van Sinderen D."/>
            <person name="O'Toole P.W."/>
        </authorList>
    </citation>
    <scope>NUCLEOTIDE SEQUENCE [LARGE SCALE GENOMIC DNA]</scope>
    <source>
        <strain>UCC118</strain>
    </source>
</reference>
<evidence type="ECO:0000255" key="1">
    <source>
        <dbReference type="HAMAP-Rule" id="MF_01037"/>
    </source>
</evidence>
<dbReference type="EC" id="2.1.1.74" evidence="1"/>
<dbReference type="EMBL" id="CP000233">
    <property type="protein sequence ID" value="ABD99531.1"/>
    <property type="molecule type" value="Genomic_DNA"/>
</dbReference>
<dbReference type="RefSeq" id="WP_011475886.1">
    <property type="nucleotide sequence ID" value="NC_007929.1"/>
</dbReference>
<dbReference type="RefSeq" id="YP_535614.1">
    <property type="nucleotide sequence ID" value="NC_007929.1"/>
</dbReference>
<dbReference type="SMR" id="Q1WU04"/>
<dbReference type="STRING" id="362948.LSL_0721"/>
<dbReference type="KEGG" id="lsl:LSL_0721"/>
<dbReference type="PATRIC" id="fig|362948.14.peg.800"/>
<dbReference type="HOGENOM" id="CLU_033057_1_0_9"/>
<dbReference type="OrthoDB" id="9803114at2"/>
<dbReference type="Proteomes" id="UP000006559">
    <property type="component" value="Chromosome"/>
</dbReference>
<dbReference type="GO" id="GO:0005829">
    <property type="term" value="C:cytosol"/>
    <property type="evidence" value="ECO:0007669"/>
    <property type="project" value="TreeGrafter"/>
</dbReference>
<dbReference type="GO" id="GO:0050660">
    <property type="term" value="F:flavin adenine dinucleotide binding"/>
    <property type="evidence" value="ECO:0007669"/>
    <property type="project" value="UniProtKB-UniRule"/>
</dbReference>
<dbReference type="GO" id="GO:0047151">
    <property type="term" value="F:tRNA (uracil(54)-C5)-methyltransferase activity, 5,10-methylenetetrahydrofolate-dependent"/>
    <property type="evidence" value="ECO:0007669"/>
    <property type="project" value="UniProtKB-UniRule"/>
</dbReference>
<dbReference type="GO" id="GO:0030488">
    <property type="term" value="P:tRNA methylation"/>
    <property type="evidence" value="ECO:0007669"/>
    <property type="project" value="TreeGrafter"/>
</dbReference>
<dbReference type="GO" id="GO:0002098">
    <property type="term" value="P:tRNA wobble uridine modification"/>
    <property type="evidence" value="ECO:0007669"/>
    <property type="project" value="TreeGrafter"/>
</dbReference>
<dbReference type="FunFam" id="3.50.50.60:FF:000035">
    <property type="entry name" value="Methylenetetrahydrofolate--tRNA-(uracil-5-)-methyltransferase TrmFO"/>
    <property type="match status" value="1"/>
</dbReference>
<dbReference type="FunFam" id="3.50.50.60:FF:000040">
    <property type="entry name" value="Methylenetetrahydrofolate--tRNA-(uracil-5-)-methyltransferase TrmFO"/>
    <property type="match status" value="1"/>
</dbReference>
<dbReference type="Gene3D" id="3.50.50.60">
    <property type="entry name" value="FAD/NAD(P)-binding domain"/>
    <property type="match status" value="2"/>
</dbReference>
<dbReference type="HAMAP" id="MF_01037">
    <property type="entry name" value="TrmFO"/>
    <property type="match status" value="1"/>
</dbReference>
<dbReference type="InterPro" id="IPR036188">
    <property type="entry name" value="FAD/NAD-bd_sf"/>
</dbReference>
<dbReference type="InterPro" id="IPR002218">
    <property type="entry name" value="MnmG-rel"/>
</dbReference>
<dbReference type="InterPro" id="IPR040131">
    <property type="entry name" value="MnmG_N"/>
</dbReference>
<dbReference type="InterPro" id="IPR004417">
    <property type="entry name" value="TrmFO"/>
</dbReference>
<dbReference type="NCBIfam" id="TIGR00137">
    <property type="entry name" value="gid_trmFO"/>
    <property type="match status" value="1"/>
</dbReference>
<dbReference type="NCBIfam" id="NF003739">
    <property type="entry name" value="PRK05335.1"/>
    <property type="match status" value="1"/>
</dbReference>
<dbReference type="PANTHER" id="PTHR11806">
    <property type="entry name" value="GLUCOSE INHIBITED DIVISION PROTEIN A"/>
    <property type="match status" value="1"/>
</dbReference>
<dbReference type="PANTHER" id="PTHR11806:SF2">
    <property type="entry name" value="METHYLENETETRAHYDROFOLATE--TRNA-(URACIL-5-)-METHYLTRANSFERASE TRMFO"/>
    <property type="match status" value="1"/>
</dbReference>
<dbReference type="Pfam" id="PF01134">
    <property type="entry name" value="GIDA"/>
    <property type="match status" value="1"/>
</dbReference>
<dbReference type="SUPFAM" id="SSF51905">
    <property type="entry name" value="FAD/NAD(P)-binding domain"/>
    <property type="match status" value="1"/>
</dbReference>
<protein>
    <recommendedName>
        <fullName evidence="1">Methylenetetrahydrofolate--tRNA-(uracil-5-)-methyltransferase TrmFO</fullName>
        <ecNumber evidence="1">2.1.1.74</ecNumber>
    </recommendedName>
    <alternativeName>
        <fullName evidence="1">Folate-dependent tRNA (uracil-5-)-methyltransferase</fullName>
    </alternativeName>
    <alternativeName>
        <fullName evidence="1">Folate-dependent tRNA(M-5-U54)-methyltransferase</fullName>
    </alternativeName>
</protein>
<sequence length="436" mass="48676">MTASVNVIGAGLAGSEAAWQIANQGVKVRLYEMRPQKLTPAHHNENFAELVCTNSLRANRLTNAAGLLKEEMRTFNSIIMESADKHSVPAGGALAVDRETFSKEVTEKLHNHPNVEIINEEIDEIPEGLTVIATGPLTSDALAKDITKFTGSDGLFFFDAAAPILEKSSLDMDKVYLKSRYDKGEAAYLNAPMTKDEFYNFYNELIKAETAELHDFEDDKFFEGCMPIEEIASRGAQTMLYGPLKPVGLEDPRTGKEPFAVVQLRQDNAAGDLYNIVGFQTHLKWGEQKRVFSMIPGLENARFVRYGVMHRNTFLCSPEVMQATYQTKKRLDLFFAGQMTGVEGYVESAASGLYAGLNAARIAQGKDPVIFPEETMMGAMAHYITHASVKNFQPINANFGIVPKLQERIRNKQERNLKISERAIDRIKKFKNLNFD</sequence>
<keyword id="KW-0963">Cytoplasm</keyword>
<keyword id="KW-0274">FAD</keyword>
<keyword id="KW-0285">Flavoprotein</keyword>
<keyword id="KW-0489">Methyltransferase</keyword>
<keyword id="KW-0520">NAD</keyword>
<keyword id="KW-0521">NADP</keyword>
<keyword id="KW-1185">Reference proteome</keyword>
<keyword id="KW-0808">Transferase</keyword>
<keyword id="KW-0819">tRNA processing</keyword>
<name>TRMFO_LIGS1</name>
<feature type="chain" id="PRO_1000072978" description="Methylenetetrahydrofolate--tRNA-(uracil-5-)-methyltransferase TrmFO">
    <location>
        <begin position="1"/>
        <end position="436"/>
    </location>
</feature>
<feature type="binding site" evidence="1">
    <location>
        <begin position="9"/>
        <end position="14"/>
    </location>
    <ligand>
        <name>FAD</name>
        <dbReference type="ChEBI" id="CHEBI:57692"/>
    </ligand>
</feature>
<gene>
    <name evidence="1" type="primary">trmFO</name>
    <name type="synonym">gid</name>
    <name type="ordered locus">LSL_0721</name>
</gene>
<organism>
    <name type="scientific">Ligilactobacillus salivarius (strain UCC118)</name>
    <name type="common">Lactobacillus salivarius</name>
    <dbReference type="NCBI Taxonomy" id="362948"/>
    <lineage>
        <taxon>Bacteria</taxon>
        <taxon>Bacillati</taxon>
        <taxon>Bacillota</taxon>
        <taxon>Bacilli</taxon>
        <taxon>Lactobacillales</taxon>
        <taxon>Lactobacillaceae</taxon>
        <taxon>Ligilactobacillus</taxon>
    </lineage>
</organism>